<feature type="chain" id="PRO_0000351025" description="DNA-directed RNA polymerase III subunit rpc3">
    <location>
        <begin position="1"/>
        <end position="627"/>
    </location>
</feature>
<feature type="region of interest" description="Disordered" evidence="2">
    <location>
        <begin position="131"/>
        <end position="162"/>
    </location>
</feature>
<feature type="region of interest" description="Disordered" evidence="2">
    <location>
        <begin position="238"/>
        <end position="291"/>
    </location>
</feature>
<feature type="region of interest" description="Disordered" evidence="2">
    <location>
        <begin position="394"/>
        <end position="420"/>
    </location>
</feature>
<feature type="region of interest" description="Leucine-zipper">
    <location>
        <begin position="554"/>
        <end position="575"/>
    </location>
</feature>
<feature type="compositionally biased region" description="Acidic residues" evidence="2">
    <location>
        <begin position="144"/>
        <end position="153"/>
    </location>
</feature>
<feature type="compositionally biased region" description="Acidic residues" evidence="2">
    <location>
        <begin position="269"/>
        <end position="288"/>
    </location>
</feature>
<accession>A2QUS7</accession>
<dbReference type="EMBL" id="AM270211">
    <property type="protein sequence ID" value="CAK40457.1"/>
    <property type="molecule type" value="Genomic_DNA"/>
</dbReference>
<dbReference type="RefSeq" id="XP_001393979.1">
    <property type="nucleotide sequence ID" value="XM_001393942.1"/>
</dbReference>
<dbReference type="SMR" id="A2QUS7"/>
<dbReference type="EnsemblFungi" id="CAK40457">
    <property type="protein sequence ID" value="CAK40457"/>
    <property type="gene ID" value="An09g06640"/>
</dbReference>
<dbReference type="GeneID" id="4984201"/>
<dbReference type="KEGG" id="ang:An09g06640"/>
<dbReference type="VEuPathDB" id="FungiDB:An09g06640"/>
<dbReference type="HOGENOM" id="CLU_023294_0_0_1"/>
<dbReference type="Proteomes" id="UP000006706">
    <property type="component" value="Chromosome 1L"/>
</dbReference>
<dbReference type="GO" id="GO:0005666">
    <property type="term" value="C:RNA polymerase III complex"/>
    <property type="evidence" value="ECO:0007669"/>
    <property type="project" value="InterPro"/>
</dbReference>
<dbReference type="GO" id="GO:0003697">
    <property type="term" value="F:single-stranded DNA binding"/>
    <property type="evidence" value="ECO:0007669"/>
    <property type="project" value="InterPro"/>
</dbReference>
<dbReference type="GO" id="GO:0006351">
    <property type="term" value="P:DNA-templated transcription"/>
    <property type="evidence" value="ECO:0007669"/>
    <property type="project" value="InterPro"/>
</dbReference>
<dbReference type="FunFam" id="1.10.10.10:FF:000362">
    <property type="entry name" value="DNA-directed RNA polymerase III subunit rpc3"/>
    <property type="match status" value="1"/>
</dbReference>
<dbReference type="FunFam" id="1.10.10.10:FF:000696">
    <property type="entry name" value="DNA-directed RNA polymerase III subunit rpc3"/>
    <property type="match status" value="1"/>
</dbReference>
<dbReference type="Gene3D" id="1.10.10.10">
    <property type="entry name" value="Winged helix-like DNA-binding domain superfamily/Winged helix DNA-binding domain"/>
    <property type="match status" value="2"/>
</dbReference>
<dbReference type="InterPro" id="IPR055207">
    <property type="entry name" value="POLR3C_WHD"/>
</dbReference>
<dbReference type="InterPro" id="IPR013197">
    <property type="entry name" value="RNA_pol_III_RPC82-rel_HTH"/>
</dbReference>
<dbReference type="InterPro" id="IPR008806">
    <property type="entry name" value="RNA_pol_III_Rpc82_C"/>
</dbReference>
<dbReference type="InterPro" id="IPR039748">
    <property type="entry name" value="RPC3"/>
</dbReference>
<dbReference type="InterPro" id="IPR036388">
    <property type="entry name" value="WH-like_DNA-bd_sf"/>
</dbReference>
<dbReference type="InterPro" id="IPR036390">
    <property type="entry name" value="WH_DNA-bd_sf"/>
</dbReference>
<dbReference type="PANTHER" id="PTHR12949:SF0">
    <property type="entry name" value="DNA-DIRECTED RNA POLYMERASE III SUBUNIT RPC3"/>
    <property type="match status" value="1"/>
</dbReference>
<dbReference type="PANTHER" id="PTHR12949">
    <property type="entry name" value="RNA POLYMERASE III DNA DIRECTED -RELATED"/>
    <property type="match status" value="1"/>
</dbReference>
<dbReference type="Pfam" id="PF08221">
    <property type="entry name" value="HTH_9"/>
    <property type="match status" value="1"/>
</dbReference>
<dbReference type="Pfam" id="PF22536">
    <property type="entry name" value="POLR3C_WHD"/>
    <property type="match status" value="1"/>
</dbReference>
<dbReference type="Pfam" id="PF05645">
    <property type="entry name" value="RNA_pol_Rpc82"/>
    <property type="match status" value="1"/>
</dbReference>
<dbReference type="SUPFAM" id="SSF46785">
    <property type="entry name" value="Winged helix' DNA-binding domain"/>
    <property type="match status" value="1"/>
</dbReference>
<evidence type="ECO:0000250" key="1"/>
<evidence type="ECO:0000256" key="2">
    <source>
        <dbReference type="SAM" id="MobiDB-lite"/>
    </source>
</evidence>
<evidence type="ECO:0000305" key="3"/>
<comment type="function">
    <text evidence="1">DNA-dependent RNA polymerase catalyzes the transcription of DNA into RNA using the four ribonucleoside triphosphates as substrates. Specific core component of RNA polymerase III which synthesizes small RNAs, such as 5S rRNA and tRNAs (By similarity).</text>
</comment>
<comment type="subunit">
    <text evidence="1">Component of the RNA polymerase III (Pol III) complex consisting of 17 subunits.</text>
</comment>
<comment type="subcellular location">
    <subcellularLocation>
        <location evidence="1">Nucleus</location>
    </subcellularLocation>
</comment>
<comment type="similarity">
    <text evidence="3">Belongs to the RNA polymerase beta chain family.</text>
</comment>
<proteinExistence type="inferred from homology"/>
<keyword id="KW-0240">DNA-directed RNA polymerase</keyword>
<keyword id="KW-0539">Nucleus</keyword>
<keyword id="KW-1185">Reference proteome</keyword>
<keyword id="KW-0804">Transcription</keyword>
<keyword id="KW-0862">Zinc</keyword>
<protein>
    <recommendedName>
        <fullName>DNA-directed RNA polymerase III subunit rpc3</fullName>
        <shortName>RNA polymerase III subunit C3</shortName>
    </recommendedName>
</protein>
<organism>
    <name type="scientific">Aspergillus niger (strain ATCC MYA-4892 / CBS 513.88 / FGSC A1513)</name>
    <dbReference type="NCBI Taxonomy" id="425011"/>
    <lineage>
        <taxon>Eukaryota</taxon>
        <taxon>Fungi</taxon>
        <taxon>Dikarya</taxon>
        <taxon>Ascomycota</taxon>
        <taxon>Pezizomycotina</taxon>
        <taxon>Eurotiomycetes</taxon>
        <taxon>Eurotiomycetidae</taxon>
        <taxon>Eurotiales</taxon>
        <taxon>Aspergillaceae</taxon>
        <taxon>Aspergillus</taxon>
        <taxon>Aspergillus subgen. Circumdati</taxon>
    </lineage>
</organism>
<reference key="1">
    <citation type="journal article" date="2007" name="Nat. Biotechnol.">
        <title>Genome sequencing and analysis of the versatile cell factory Aspergillus niger CBS 513.88.</title>
        <authorList>
            <person name="Pel H.J."/>
            <person name="de Winde J.H."/>
            <person name="Archer D.B."/>
            <person name="Dyer P.S."/>
            <person name="Hofmann G."/>
            <person name="Schaap P.J."/>
            <person name="Turner G."/>
            <person name="de Vries R.P."/>
            <person name="Albang R."/>
            <person name="Albermann K."/>
            <person name="Andersen M.R."/>
            <person name="Bendtsen J.D."/>
            <person name="Benen J.A.E."/>
            <person name="van den Berg M."/>
            <person name="Breestraat S."/>
            <person name="Caddick M.X."/>
            <person name="Contreras R."/>
            <person name="Cornell M."/>
            <person name="Coutinho P.M."/>
            <person name="Danchin E.G.J."/>
            <person name="Debets A.J.M."/>
            <person name="Dekker P."/>
            <person name="van Dijck P.W.M."/>
            <person name="van Dijk A."/>
            <person name="Dijkhuizen L."/>
            <person name="Driessen A.J.M."/>
            <person name="d'Enfert C."/>
            <person name="Geysens S."/>
            <person name="Goosen C."/>
            <person name="Groot G.S.P."/>
            <person name="de Groot P.W.J."/>
            <person name="Guillemette T."/>
            <person name="Henrissat B."/>
            <person name="Herweijer M."/>
            <person name="van den Hombergh J.P.T.W."/>
            <person name="van den Hondel C.A.M.J.J."/>
            <person name="van der Heijden R.T.J.M."/>
            <person name="van der Kaaij R.M."/>
            <person name="Klis F.M."/>
            <person name="Kools H.J."/>
            <person name="Kubicek C.P."/>
            <person name="van Kuyk P.A."/>
            <person name="Lauber J."/>
            <person name="Lu X."/>
            <person name="van der Maarel M.J.E.C."/>
            <person name="Meulenberg R."/>
            <person name="Menke H."/>
            <person name="Mortimer M.A."/>
            <person name="Nielsen J."/>
            <person name="Oliver S.G."/>
            <person name="Olsthoorn M."/>
            <person name="Pal K."/>
            <person name="van Peij N.N.M.E."/>
            <person name="Ram A.F.J."/>
            <person name="Rinas U."/>
            <person name="Roubos J.A."/>
            <person name="Sagt C.M.J."/>
            <person name="Schmoll M."/>
            <person name="Sun J."/>
            <person name="Ussery D."/>
            <person name="Varga J."/>
            <person name="Vervecken W."/>
            <person name="van de Vondervoort P.J.J."/>
            <person name="Wedler H."/>
            <person name="Woesten H.A.B."/>
            <person name="Zeng A.-P."/>
            <person name="van Ooyen A.J.J."/>
            <person name="Visser J."/>
            <person name="Stam H."/>
        </authorList>
    </citation>
    <scope>NUCLEOTIDE SEQUENCE [LARGE SCALE GENOMIC DNA]</scope>
    <source>
        <strain>ATCC MYA-4892 / CBS 513.88 / FGSC A1513</strain>
    </source>
</reference>
<sequence>MTSQYAAELCALLVEDNFGELFARIFSTLQRYDRLSLPRLKFYSRLSDRQLRHGLSAMIQHHLVYHYTSYDDGVTYYEPNLQAAYYLVRSGKILEFIEERLGKYAATLMETIMFLGHAQVGYLETLPELQPAPPKANGVKQEAEGGESEEQMNGDDVHTSDQPALLHPTLKALASHGYIFRVRDAQFQSYADNALDAERAIKSRPDVKQLKGKKLDETVLEGTVTLLKERLDGDLTRGLMHNGLPRGAKRRHGTGSADATNKKARMDYVDADEDEDEEENEWSDDEMGGDTTPMELAIVVRVNYEKLDVALRNRRFLDLAEMNSSPVTAQVYEGLLRRIEYQTKQCRDSAEIPREGEEGEQYSVPIALSAVTEEVDPQLDLAGSIGPMEISQAINKRGKRPLEDSVNGTDREGSEAPSRTYEVDQHLSLLSQPPYNLTSKRVLSGLITWTVEFRHLARKLRHLELERMIEARYGDVALRVIRVLHAKGKLDEKRLQEISLLPFKDLRQVLASMQSGGFVDLQEVPRDAQRQPSRTIYLWYYDPDRIRSSILEDTYKAMSRCMQRLRFERNRLKEFLEKTERSDVKGNEERYLSQAELTLLEQWKAKEALLLGEVARLDEMVAVMRDY</sequence>
<name>RPC3_ASPNC</name>
<gene>
    <name type="primary">rpc82</name>
    <name type="synonym">rpc3</name>
    <name type="ORF">An09g06640</name>
</gene>